<proteinExistence type="inferred from homology"/>
<protein>
    <recommendedName>
        <fullName evidence="1">DNA ligase</fullName>
        <ecNumber evidence="1">6.5.1.1</ecNumber>
    </recommendedName>
    <alternativeName>
        <fullName evidence="1">Polydeoxyribonucleotide synthase [ATP]</fullName>
    </alternativeName>
</protein>
<comment type="function">
    <text evidence="1">DNA ligase that seals nicks in double-stranded DNA during DNA replication, DNA recombination and DNA repair.</text>
</comment>
<comment type="catalytic activity">
    <reaction evidence="1">
        <text>ATP + (deoxyribonucleotide)n-3'-hydroxyl + 5'-phospho-(deoxyribonucleotide)m = (deoxyribonucleotide)n+m + AMP + diphosphate.</text>
        <dbReference type="EC" id="6.5.1.1"/>
    </reaction>
</comment>
<comment type="cofactor">
    <cofactor evidence="1">
        <name>Mg(2+)</name>
        <dbReference type="ChEBI" id="CHEBI:18420"/>
    </cofactor>
</comment>
<comment type="similarity">
    <text evidence="1">Belongs to the ATP-dependent DNA ligase family.</text>
</comment>
<organism>
    <name type="scientific">Pyrobaculum calidifontis (strain DSM 21063 / JCM 11548 / VA1)</name>
    <dbReference type="NCBI Taxonomy" id="410359"/>
    <lineage>
        <taxon>Archaea</taxon>
        <taxon>Thermoproteota</taxon>
        <taxon>Thermoprotei</taxon>
        <taxon>Thermoproteales</taxon>
        <taxon>Thermoproteaceae</taxon>
        <taxon>Pyrobaculum</taxon>
    </lineage>
</organism>
<reference key="1">
    <citation type="submission" date="2007-02" db="EMBL/GenBank/DDBJ databases">
        <title>Complete sequence of Pyrobaculum calidifontis JCM 11548.</title>
        <authorList>
            <consortium name="US DOE Joint Genome Institute"/>
            <person name="Copeland A."/>
            <person name="Lucas S."/>
            <person name="Lapidus A."/>
            <person name="Barry K."/>
            <person name="Glavina del Rio T."/>
            <person name="Dalin E."/>
            <person name="Tice H."/>
            <person name="Pitluck S."/>
            <person name="Chain P."/>
            <person name="Malfatti S."/>
            <person name="Shin M."/>
            <person name="Vergez L."/>
            <person name="Schmutz J."/>
            <person name="Larimer F."/>
            <person name="Land M."/>
            <person name="Hauser L."/>
            <person name="Kyrpides N."/>
            <person name="Mikhailova N."/>
            <person name="Cozen A.E."/>
            <person name="Fitz-Gibbon S.T."/>
            <person name="House C.H."/>
            <person name="Saltikov C."/>
            <person name="Lowe T.M."/>
            <person name="Richardson P."/>
        </authorList>
    </citation>
    <scope>NUCLEOTIDE SEQUENCE [LARGE SCALE GENOMIC DNA]</scope>
    <source>
        <strain>DSM 21063 / JCM 11548 / VA1</strain>
    </source>
</reference>
<gene>
    <name evidence="1" type="primary">lig</name>
    <name type="ordered locus">Pcal_0039</name>
</gene>
<sequence length="583" mass="64840">MQFGELAKVLAAVESTTQRTTMVKLLTSLFKKAKPEEIDKIVYFILGDLRPPWEGVELGVAEKLCIRAISKATGLSAAELEGWYKKSGDVGEVARRALAAGKRPTLLAFAQQKPLEVAEVYDTLLKVAKAAGEGAQDLKVSLLSSLFSRASPEEAKYIARFVVGKLRLGVADMTLIEALSEAFGVSKEGLERAYHVYPDLGRLARHVAEGRPLEEIKITPGVPVLPMLAQRLSSASEILAKLGGTAICEYKYDGERAQIHLREGSVKIFSRRLEDITHAYPDVAKAVKEAVKAREAILEGEIVAVDPDTGEMLPFQELMHRKRKHDVAEAMEAYPAVLYLFDLLYVDGEDLTTQPLIYRRLRLSEVVEEGGDVYIAKWGMFDGAEDVDLFFHEAVSLGTEGLICKSPTSTYEMGARGWNWIKYKRDYRSEMIDTVDLVVVGAFHGRGKRAGLYGAFLLAAYDPSTDMFYTVCKVGSGFTDADLRRMYDMLQPLKIPHRHPRVVSKMQPDVWFVPQVVIEVIGAEITLSPLHTCCIGAVKPGVGLAIRFPRFTGRYRTDKRPEDATTTKELVEMYQRQKKVPTT</sequence>
<accession>A3MS62</accession>
<dbReference type="EC" id="6.5.1.1" evidence="1"/>
<dbReference type="EMBL" id="CP000561">
    <property type="protein sequence ID" value="ABO07479.1"/>
    <property type="molecule type" value="Genomic_DNA"/>
</dbReference>
<dbReference type="RefSeq" id="WP_011848736.1">
    <property type="nucleotide sequence ID" value="NC_009073.1"/>
</dbReference>
<dbReference type="SMR" id="A3MS62"/>
<dbReference type="STRING" id="410359.Pcal_0039"/>
<dbReference type="GeneID" id="4908550"/>
<dbReference type="KEGG" id="pcl:Pcal_0039"/>
<dbReference type="eggNOG" id="arCOG01347">
    <property type="taxonomic scope" value="Archaea"/>
</dbReference>
<dbReference type="HOGENOM" id="CLU_005138_6_0_2"/>
<dbReference type="OrthoDB" id="31274at2157"/>
<dbReference type="Proteomes" id="UP000001431">
    <property type="component" value="Chromosome"/>
</dbReference>
<dbReference type="GO" id="GO:0005524">
    <property type="term" value="F:ATP binding"/>
    <property type="evidence" value="ECO:0007669"/>
    <property type="project" value="UniProtKB-UniRule"/>
</dbReference>
<dbReference type="GO" id="GO:0003677">
    <property type="term" value="F:DNA binding"/>
    <property type="evidence" value="ECO:0007669"/>
    <property type="project" value="InterPro"/>
</dbReference>
<dbReference type="GO" id="GO:0003910">
    <property type="term" value="F:DNA ligase (ATP) activity"/>
    <property type="evidence" value="ECO:0007669"/>
    <property type="project" value="UniProtKB-UniRule"/>
</dbReference>
<dbReference type="GO" id="GO:0046872">
    <property type="term" value="F:metal ion binding"/>
    <property type="evidence" value="ECO:0007669"/>
    <property type="project" value="UniProtKB-KW"/>
</dbReference>
<dbReference type="GO" id="GO:0051301">
    <property type="term" value="P:cell division"/>
    <property type="evidence" value="ECO:0007669"/>
    <property type="project" value="UniProtKB-KW"/>
</dbReference>
<dbReference type="GO" id="GO:0071897">
    <property type="term" value="P:DNA biosynthetic process"/>
    <property type="evidence" value="ECO:0007669"/>
    <property type="project" value="InterPro"/>
</dbReference>
<dbReference type="GO" id="GO:0006310">
    <property type="term" value="P:DNA recombination"/>
    <property type="evidence" value="ECO:0007669"/>
    <property type="project" value="UniProtKB-UniRule"/>
</dbReference>
<dbReference type="GO" id="GO:0006281">
    <property type="term" value="P:DNA repair"/>
    <property type="evidence" value="ECO:0007669"/>
    <property type="project" value="UniProtKB-UniRule"/>
</dbReference>
<dbReference type="GO" id="GO:0006273">
    <property type="term" value="P:lagging strand elongation"/>
    <property type="evidence" value="ECO:0007669"/>
    <property type="project" value="TreeGrafter"/>
</dbReference>
<dbReference type="CDD" id="cd07901">
    <property type="entry name" value="Adenylation_DNA_ligase_Arch_LigB"/>
    <property type="match status" value="1"/>
</dbReference>
<dbReference type="CDD" id="cd07969">
    <property type="entry name" value="OBF_DNA_ligase_I"/>
    <property type="match status" value="1"/>
</dbReference>
<dbReference type="FunFam" id="1.10.3260.10:FF:000007">
    <property type="entry name" value="DNA ligase"/>
    <property type="match status" value="1"/>
</dbReference>
<dbReference type="FunFam" id="2.40.50.140:FF:000062">
    <property type="entry name" value="DNA ligase"/>
    <property type="match status" value="1"/>
</dbReference>
<dbReference type="FunFam" id="3.30.470.30:FF:000012">
    <property type="entry name" value="Probable DNA ligase"/>
    <property type="match status" value="1"/>
</dbReference>
<dbReference type="Gene3D" id="1.10.3260.10">
    <property type="entry name" value="DNA ligase, ATP-dependent, N-terminal domain"/>
    <property type="match status" value="1"/>
</dbReference>
<dbReference type="Gene3D" id="3.30.470.30">
    <property type="entry name" value="DNA ligase/mRNA capping enzyme"/>
    <property type="match status" value="1"/>
</dbReference>
<dbReference type="Gene3D" id="2.40.50.140">
    <property type="entry name" value="Nucleic acid-binding proteins"/>
    <property type="match status" value="1"/>
</dbReference>
<dbReference type="HAMAP" id="MF_00407">
    <property type="entry name" value="DNA_ligase"/>
    <property type="match status" value="1"/>
</dbReference>
<dbReference type="InterPro" id="IPR050191">
    <property type="entry name" value="ATP-dep_DNA_ligase"/>
</dbReference>
<dbReference type="InterPro" id="IPR022865">
    <property type="entry name" value="DNA_ligae_ATP-dep_bac/arc"/>
</dbReference>
<dbReference type="InterPro" id="IPR000977">
    <property type="entry name" value="DNA_ligase_ATP-dep"/>
</dbReference>
<dbReference type="InterPro" id="IPR012309">
    <property type="entry name" value="DNA_ligase_ATP-dep_C"/>
</dbReference>
<dbReference type="InterPro" id="IPR012310">
    <property type="entry name" value="DNA_ligase_ATP-dep_cent"/>
</dbReference>
<dbReference type="InterPro" id="IPR016059">
    <property type="entry name" value="DNA_ligase_ATP-dep_CS"/>
</dbReference>
<dbReference type="InterPro" id="IPR012308">
    <property type="entry name" value="DNA_ligase_ATP-dep_N"/>
</dbReference>
<dbReference type="InterPro" id="IPR036599">
    <property type="entry name" value="DNA_ligase_N_sf"/>
</dbReference>
<dbReference type="InterPro" id="IPR012340">
    <property type="entry name" value="NA-bd_OB-fold"/>
</dbReference>
<dbReference type="NCBIfam" id="TIGR00574">
    <property type="entry name" value="dnl1"/>
    <property type="match status" value="1"/>
</dbReference>
<dbReference type="PANTHER" id="PTHR45674:SF4">
    <property type="entry name" value="DNA LIGASE 1"/>
    <property type="match status" value="1"/>
</dbReference>
<dbReference type="PANTHER" id="PTHR45674">
    <property type="entry name" value="DNA LIGASE 1/3 FAMILY MEMBER"/>
    <property type="match status" value="1"/>
</dbReference>
<dbReference type="Pfam" id="PF04679">
    <property type="entry name" value="DNA_ligase_A_C"/>
    <property type="match status" value="1"/>
</dbReference>
<dbReference type="Pfam" id="PF01068">
    <property type="entry name" value="DNA_ligase_A_M"/>
    <property type="match status" value="1"/>
</dbReference>
<dbReference type="Pfam" id="PF04675">
    <property type="entry name" value="DNA_ligase_A_N"/>
    <property type="match status" value="1"/>
</dbReference>
<dbReference type="SUPFAM" id="SSF117018">
    <property type="entry name" value="ATP-dependent DNA ligase DNA-binding domain"/>
    <property type="match status" value="1"/>
</dbReference>
<dbReference type="SUPFAM" id="SSF56091">
    <property type="entry name" value="DNA ligase/mRNA capping enzyme, catalytic domain"/>
    <property type="match status" value="1"/>
</dbReference>
<dbReference type="SUPFAM" id="SSF50249">
    <property type="entry name" value="Nucleic acid-binding proteins"/>
    <property type="match status" value="1"/>
</dbReference>
<dbReference type="PROSITE" id="PS00697">
    <property type="entry name" value="DNA_LIGASE_A1"/>
    <property type="match status" value="1"/>
</dbReference>
<dbReference type="PROSITE" id="PS50160">
    <property type="entry name" value="DNA_LIGASE_A3"/>
    <property type="match status" value="1"/>
</dbReference>
<evidence type="ECO:0000255" key="1">
    <source>
        <dbReference type="HAMAP-Rule" id="MF_00407"/>
    </source>
</evidence>
<keyword id="KW-0067">ATP-binding</keyword>
<keyword id="KW-0131">Cell cycle</keyword>
<keyword id="KW-0132">Cell division</keyword>
<keyword id="KW-0227">DNA damage</keyword>
<keyword id="KW-0233">DNA recombination</keyword>
<keyword id="KW-0234">DNA repair</keyword>
<keyword id="KW-0235">DNA replication</keyword>
<keyword id="KW-0436">Ligase</keyword>
<keyword id="KW-0460">Magnesium</keyword>
<keyword id="KW-0479">Metal-binding</keyword>
<keyword id="KW-0547">Nucleotide-binding</keyword>
<name>DNLI_PYRCJ</name>
<feature type="chain" id="PRO_1000049876" description="DNA ligase">
    <location>
        <begin position="1"/>
        <end position="583"/>
    </location>
</feature>
<feature type="active site" description="N6-AMP-lysine intermediate" evidence="1">
    <location>
        <position position="251"/>
    </location>
</feature>
<feature type="binding site" evidence="1">
    <location>
        <position position="249"/>
    </location>
    <ligand>
        <name>ATP</name>
        <dbReference type="ChEBI" id="CHEBI:30616"/>
    </ligand>
</feature>
<feature type="binding site" evidence="1">
    <location>
        <position position="256"/>
    </location>
    <ligand>
        <name>ATP</name>
        <dbReference type="ChEBI" id="CHEBI:30616"/>
    </ligand>
</feature>
<feature type="binding site" evidence="1">
    <location>
        <position position="271"/>
    </location>
    <ligand>
        <name>ATP</name>
        <dbReference type="ChEBI" id="CHEBI:30616"/>
    </ligand>
</feature>
<feature type="binding site" evidence="1">
    <location>
        <position position="301"/>
    </location>
    <ligand>
        <name>ATP</name>
        <dbReference type="ChEBI" id="CHEBI:30616"/>
    </ligand>
</feature>
<feature type="binding site" evidence="1">
    <location>
        <position position="341"/>
    </location>
    <ligand>
        <name>ATP</name>
        <dbReference type="ChEBI" id="CHEBI:30616"/>
    </ligand>
</feature>
<feature type="binding site" evidence="1">
    <location>
        <position position="416"/>
    </location>
    <ligand>
        <name>ATP</name>
        <dbReference type="ChEBI" id="CHEBI:30616"/>
    </ligand>
</feature>
<feature type="binding site" evidence="1">
    <location>
        <position position="422"/>
    </location>
    <ligand>
        <name>ATP</name>
        <dbReference type="ChEBI" id="CHEBI:30616"/>
    </ligand>
</feature>